<protein>
    <recommendedName>
        <fullName evidence="1">Crossover junction endodeoxyribonuclease RuvC</fullName>
        <ecNumber evidence="1">3.1.21.10</ecNumber>
    </recommendedName>
    <alternativeName>
        <fullName evidence="1">Holliday junction nuclease RuvC</fullName>
    </alternativeName>
    <alternativeName>
        <fullName evidence="1">Holliday junction resolvase RuvC</fullName>
    </alternativeName>
</protein>
<organism>
    <name type="scientific">Burkholderia cenocepacia (strain HI2424)</name>
    <dbReference type="NCBI Taxonomy" id="331272"/>
    <lineage>
        <taxon>Bacteria</taxon>
        <taxon>Pseudomonadati</taxon>
        <taxon>Pseudomonadota</taxon>
        <taxon>Betaproteobacteria</taxon>
        <taxon>Burkholderiales</taxon>
        <taxon>Burkholderiaceae</taxon>
        <taxon>Burkholderia</taxon>
        <taxon>Burkholderia cepacia complex</taxon>
    </lineage>
</organism>
<sequence>MRILGIDPGLRVTGFGVIDVSGHRLAYVTSGVIRTPTADLATRLGTIFQGVSTIVREHAPDQAAIEKVFVNVNPQSTLLLGQARGAAICGLVAGGLPVAEYTALQLKQAVVGYGRATKTQMQEMVTRLLNLSGQPGSDAADALGMAICHAHGGNTLSTLGGLAPALAQKGLRVRRGRLVG</sequence>
<gene>
    <name evidence="1" type="primary">ruvC</name>
    <name type="ordered locus">Bcen2424_0690</name>
</gene>
<reference key="1">
    <citation type="submission" date="2006-08" db="EMBL/GenBank/DDBJ databases">
        <title>Complete sequence of chromosome 1 of Burkholderia cenocepacia HI2424.</title>
        <authorList>
            <person name="Copeland A."/>
            <person name="Lucas S."/>
            <person name="Lapidus A."/>
            <person name="Barry K."/>
            <person name="Detter J.C."/>
            <person name="Glavina del Rio T."/>
            <person name="Hammon N."/>
            <person name="Israni S."/>
            <person name="Pitluck S."/>
            <person name="Chain P."/>
            <person name="Malfatti S."/>
            <person name="Shin M."/>
            <person name="Vergez L."/>
            <person name="Schmutz J."/>
            <person name="Larimer F."/>
            <person name="Land M."/>
            <person name="Hauser L."/>
            <person name="Kyrpides N."/>
            <person name="Kim E."/>
            <person name="LiPuma J.J."/>
            <person name="Gonzalez C.F."/>
            <person name="Konstantinidis K."/>
            <person name="Tiedje J.M."/>
            <person name="Richardson P."/>
        </authorList>
    </citation>
    <scope>NUCLEOTIDE SEQUENCE [LARGE SCALE GENOMIC DNA]</scope>
    <source>
        <strain>HI2424</strain>
    </source>
</reference>
<proteinExistence type="inferred from homology"/>
<accession>A0K4L6</accession>
<feature type="chain" id="PRO_1000002728" description="Crossover junction endodeoxyribonuclease RuvC">
    <location>
        <begin position="1"/>
        <end position="180"/>
    </location>
</feature>
<feature type="active site" evidence="1">
    <location>
        <position position="7"/>
    </location>
</feature>
<feature type="active site" evidence="1">
    <location>
        <position position="66"/>
    </location>
</feature>
<feature type="active site" evidence="1">
    <location>
        <position position="138"/>
    </location>
</feature>
<feature type="binding site" evidence="1">
    <location>
        <position position="7"/>
    </location>
    <ligand>
        <name>Mg(2+)</name>
        <dbReference type="ChEBI" id="CHEBI:18420"/>
        <label>1</label>
    </ligand>
</feature>
<feature type="binding site" evidence="1">
    <location>
        <position position="66"/>
    </location>
    <ligand>
        <name>Mg(2+)</name>
        <dbReference type="ChEBI" id="CHEBI:18420"/>
        <label>2</label>
    </ligand>
</feature>
<feature type="binding site" evidence="1">
    <location>
        <position position="138"/>
    </location>
    <ligand>
        <name>Mg(2+)</name>
        <dbReference type="ChEBI" id="CHEBI:18420"/>
        <label>1</label>
    </ligand>
</feature>
<keyword id="KW-0963">Cytoplasm</keyword>
<keyword id="KW-0227">DNA damage</keyword>
<keyword id="KW-0233">DNA recombination</keyword>
<keyword id="KW-0234">DNA repair</keyword>
<keyword id="KW-0238">DNA-binding</keyword>
<keyword id="KW-0255">Endonuclease</keyword>
<keyword id="KW-0378">Hydrolase</keyword>
<keyword id="KW-0460">Magnesium</keyword>
<keyword id="KW-0479">Metal-binding</keyword>
<keyword id="KW-0540">Nuclease</keyword>
<comment type="function">
    <text evidence="1">The RuvA-RuvB-RuvC complex processes Holliday junction (HJ) DNA during genetic recombination and DNA repair. Endonuclease that resolves HJ intermediates. Cleaves cruciform DNA by making single-stranded nicks across the HJ at symmetrical positions within the homologous arms, yielding a 5'-phosphate and a 3'-hydroxyl group; requires a central core of homology in the junction. The consensus cleavage sequence is 5'-(A/T)TT(C/G)-3'. Cleavage occurs on the 3'-side of the TT dinucleotide at the point of strand exchange. HJ branch migration catalyzed by RuvA-RuvB allows RuvC to scan DNA until it finds its consensus sequence, where it cleaves and resolves the cruciform DNA.</text>
</comment>
<comment type="catalytic activity">
    <reaction evidence="1">
        <text>Endonucleolytic cleavage at a junction such as a reciprocal single-stranded crossover between two homologous DNA duplexes (Holliday junction).</text>
        <dbReference type="EC" id="3.1.21.10"/>
    </reaction>
</comment>
<comment type="cofactor">
    <cofactor evidence="1">
        <name>Mg(2+)</name>
        <dbReference type="ChEBI" id="CHEBI:18420"/>
    </cofactor>
    <text evidence="1">Binds 2 Mg(2+) ion per subunit.</text>
</comment>
<comment type="subunit">
    <text evidence="1">Homodimer which binds Holliday junction (HJ) DNA. The HJ becomes 2-fold symmetrical on binding to RuvC with unstacked arms; it has a different conformation from HJ DNA in complex with RuvA. In the full resolvosome a probable DNA-RuvA(4)-RuvB(12)-RuvC(2) complex forms which resolves the HJ.</text>
</comment>
<comment type="subcellular location">
    <subcellularLocation>
        <location evidence="1">Cytoplasm</location>
    </subcellularLocation>
</comment>
<comment type="similarity">
    <text evidence="1">Belongs to the RuvC family.</text>
</comment>
<evidence type="ECO:0000255" key="1">
    <source>
        <dbReference type="HAMAP-Rule" id="MF_00034"/>
    </source>
</evidence>
<dbReference type="EC" id="3.1.21.10" evidence="1"/>
<dbReference type="EMBL" id="CP000458">
    <property type="protein sequence ID" value="ABK07443.1"/>
    <property type="molecule type" value="Genomic_DNA"/>
</dbReference>
<dbReference type="RefSeq" id="WP_006476894.1">
    <property type="nucleotide sequence ID" value="NC_008542.1"/>
</dbReference>
<dbReference type="SMR" id="A0K4L6"/>
<dbReference type="GeneID" id="56557126"/>
<dbReference type="KEGG" id="bch:Bcen2424_0690"/>
<dbReference type="HOGENOM" id="CLU_091257_2_0_4"/>
<dbReference type="GO" id="GO:0005737">
    <property type="term" value="C:cytoplasm"/>
    <property type="evidence" value="ECO:0007669"/>
    <property type="project" value="UniProtKB-SubCell"/>
</dbReference>
<dbReference type="GO" id="GO:0048476">
    <property type="term" value="C:Holliday junction resolvase complex"/>
    <property type="evidence" value="ECO:0007669"/>
    <property type="project" value="UniProtKB-UniRule"/>
</dbReference>
<dbReference type="GO" id="GO:0008821">
    <property type="term" value="F:crossover junction DNA endonuclease activity"/>
    <property type="evidence" value="ECO:0007669"/>
    <property type="project" value="UniProtKB-UniRule"/>
</dbReference>
<dbReference type="GO" id="GO:0003677">
    <property type="term" value="F:DNA binding"/>
    <property type="evidence" value="ECO:0007669"/>
    <property type="project" value="UniProtKB-KW"/>
</dbReference>
<dbReference type="GO" id="GO:0000287">
    <property type="term" value="F:magnesium ion binding"/>
    <property type="evidence" value="ECO:0007669"/>
    <property type="project" value="UniProtKB-UniRule"/>
</dbReference>
<dbReference type="GO" id="GO:0006310">
    <property type="term" value="P:DNA recombination"/>
    <property type="evidence" value="ECO:0007669"/>
    <property type="project" value="UniProtKB-UniRule"/>
</dbReference>
<dbReference type="GO" id="GO:0006281">
    <property type="term" value="P:DNA repair"/>
    <property type="evidence" value="ECO:0007669"/>
    <property type="project" value="UniProtKB-UniRule"/>
</dbReference>
<dbReference type="CDD" id="cd16962">
    <property type="entry name" value="RuvC"/>
    <property type="match status" value="1"/>
</dbReference>
<dbReference type="FunFam" id="3.30.420.10:FF:000002">
    <property type="entry name" value="Crossover junction endodeoxyribonuclease RuvC"/>
    <property type="match status" value="1"/>
</dbReference>
<dbReference type="Gene3D" id="3.30.420.10">
    <property type="entry name" value="Ribonuclease H-like superfamily/Ribonuclease H"/>
    <property type="match status" value="1"/>
</dbReference>
<dbReference type="HAMAP" id="MF_00034">
    <property type="entry name" value="RuvC"/>
    <property type="match status" value="1"/>
</dbReference>
<dbReference type="InterPro" id="IPR012337">
    <property type="entry name" value="RNaseH-like_sf"/>
</dbReference>
<dbReference type="InterPro" id="IPR036397">
    <property type="entry name" value="RNaseH_sf"/>
</dbReference>
<dbReference type="InterPro" id="IPR020563">
    <property type="entry name" value="X-over_junc_endoDNase_Mg_BS"/>
</dbReference>
<dbReference type="InterPro" id="IPR002176">
    <property type="entry name" value="X-over_junc_endoDNase_RuvC"/>
</dbReference>
<dbReference type="NCBIfam" id="TIGR00228">
    <property type="entry name" value="ruvC"/>
    <property type="match status" value="1"/>
</dbReference>
<dbReference type="PANTHER" id="PTHR30194">
    <property type="entry name" value="CROSSOVER JUNCTION ENDODEOXYRIBONUCLEASE RUVC"/>
    <property type="match status" value="1"/>
</dbReference>
<dbReference type="PANTHER" id="PTHR30194:SF3">
    <property type="entry name" value="CROSSOVER JUNCTION ENDODEOXYRIBONUCLEASE RUVC"/>
    <property type="match status" value="1"/>
</dbReference>
<dbReference type="Pfam" id="PF02075">
    <property type="entry name" value="RuvC"/>
    <property type="match status" value="1"/>
</dbReference>
<dbReference type="PRINTS" id="PR00696">
    <property type="entry name" value="RSOLVASERUVC"/>
</dbReference>
<dbReference type="SUPFAM" id="SSF53098">
    <property type="entry name" value="Ribonuclease H-like"/>
    <property type="match status" value="1"/>
</dbReference>
<dbReference type="PROSITE" id="PS01321">
    <property type="entry name" value="RUVC"/>
    <property type="match status" value="1"/>
</dbReference>
<name>RUVC_BURCH</name>